<protein>
    <recommendedName>
        <fullName evidence="1">Cysteine--tRNA ligase</fullName>
        <ecNumber evidence="1">6.1.1.16</ecNumber>
    </recommendedName>
    <alternativeName>
        <fullName evidence="1">Cysteinyl-tRNA synthetase</fullName>
        <shortName evidence="1">CysRS</shortName>
    </alternativeName>
</protein>
<organism>
    <name type="scientific">Shewanella denitrificans (strain OS217 / ATCC BAA-1090 / DSM 15013)</name>
    <dbReference type="NCBI Taxonomy" id="318161"/>
    <lineage>
        <taxon>Bacteria</taxon>
        <taxon>Pseudomonadati</taxon>
        <taxon>Pseudomonadota</taxon>
        <taxon>Gammaproteobacteria</taxon>
        <taxon>Alteromonadales</taxon>
        <taxon>Shewanellaceae</taxon>
        <taxon>Shewanella</taxon>
    </lineage>
</organism>
<accession>Q12L98</accession>
<feature type="chain" id="PRO_0000332901" description="Cysteine--tRNA ligase">
    <location>
        <begin position="1"/>
        <end position="459"/>
    </location>
</feature>
<feature type="short sequence motif" description="'HIGH' region">
    <location>
        <begin position="30"/>
        <end position="40"/>
    </location>
</feature>
<feature type="short sequence motif" description="'KMSKS' region">
    <location>
        <begin position="266"/>
        <end position="270"/>
    </location>
</feature>
<feature type="binding site" evidence="1">
    <location>
        <position position="28"/>
    </location>
    <ligand>
        <name>Zn(2+)</name>
        <dbReference type="ChEBI" id="CHEBI:29105"/>
    </ligand>
</feature>
<feature type="binding site" evidence="1">
    <location>
        <position position="209"/>
    </location>
    <ligand>
        <name>Zn(2+)</name>
        <dbReference type="ChEBI" id="CHEBI:29105"/>
    </ligand>
</feature>
<feature type="binding site" evidence="1">
    <location>
        <position position="234"/>
    </location>
    <ligand>
        <name>Zn(2+)</name>
        <dbReference type="ChEBI" id="CHEBI:29105"/>
    </ligand>
</feature>
<feature type="binding site" evidence="1">
    <location>
        <position position="238"/>
    </location>
    <ligand>
        <name>Zn(2+)</name>
        <dbReference type="ChEBI" id="CHEBI:29105"/>
    </ligand>
</feature>
<feature type="binding site" evidence="1">
    <location>
        <position position="269"/>
    </location>
    <ligand>
        <name>ATP</name>
        <dbReference type="ChEBI" id="CHEBI:30616"/>
    </ligand>
</feature>
<name>SYC_SHEDO</name>
<gene>
    <name evidence="1" type="primary">cysS</name>
    <name type="ordered locus">Sden_2498</name>
</gene>
<keyword id="KW-0030">Aminoacyl-tRNA synthetase</keyword>
<keyword id="KW-0067">ATP-binding</keyword>
<keyword id="KW-0963">Cytoplasm</keyword>
<keyword id="KW-0436">Ligase</keyword>
<keyword id="KW-0479">Metal-binding</keyword>
<keyword id="KW-0547">Nucleotide-binding</keyword>
<keyword id="KW-0648">Protein biosynthesis</keyword>
<keyword id="KW-1185">Reference proteome</keyword>
<keyword id="KW-0862">Zinc</keyword>
<dbReference type="EC" id="6.1.1.16" evidence="1"/>
<dbReference type="EMBL" id="CP000302">
    <property type="protein sequence ID" value="ABE55778.1"/>
    <property type="molecule type" value="Genomic_DNA"/>
</dbReference>
<dbReference type="RefSeq" id="WP_011496929.1">
    <property type="nucleotide sequence ID" value="NC_007954.1"/>
</dbReference>
<dbReference type="SMR" id="Q12L98"/>
<dbReference type="STRING" id="318161.Sden_2498"/>
<dbReference type="KEGG" id="sdn:Sden_2498"/>
<dbReference type="eggNOG" id="COG0215">
    <property type="taxonomic scope" value="Bacteria"/>
</dbReference>
<dbReference type="HOGENOM" id="CLU_013528_0_1_6"/>
<dbReference type="OrthoDB" id="9815130at2"/>
<dbReference type="Proteomes" id="UP000001982">
    <property type="component" value="Chromosome"/>
</dbReference>
<dbReference type="GO" id="GO:0005829">
    <property type="term" value="C:cytosol"/>
    <property type="evidence" value="ECO:0007669"/>
    <property type="project" value="TreeGrafter"/>
</dbReference>
<dbReference type="GO" id="GO:0005524">
    <property type="term" value="F:ATP binding"/>
    <property type="evidence" value="ECO:0007669"/>
    <property type="project" value="UniProtKB-UniRule"/>
</dbReference>
<dbReference type="GO" id="GO:0004817">
    <property type="term" value="F:cysteine-tRNA ligase activity"/>
    <property type="evidence" value="ECO:0007669"/>
    <property type="project" value="UniProtKB-UniRule"/>
</dbReference>
<dbReference type="GO" id="GO:0008270">
    <property type="term" value="F:zinc ion binding"/>
    <property type="evidence" value="ECO:0007669"/>
    <property type="project" value="UniProtKB-UniRule"/>
</dbReference>
<dbReference type="GO" id="GO:0006423">
    <property type="term" value="P:cysteinyl-tRNA aminoacylation"/>
    <property type="evidence" value="ECO:0007669"/>
    <property type="project" value="UniProtKB-UniRule"/>
</dbReference>
<dbReference type="CDD" id="cd07963">
    <property type="entry name" value="Anticodon_Ia_Cys"/>
    <property type="match status" value="1"/>
</dbReference>
<dbReference type="CDD" id="cd00672">
    <property type="entry name" value="CysRS_core"/>
    <property type="match status" value="1"/>
</dbReference>
<dbReference type="FunFam" id="1.20.120.1910:FF:000001">
    <property type="entry name" value="Cysteine--tRNA ligase"/>
    <property type="match status" value="1"/>
</dbReference>
<dbReference type="FunFam" id="3.40.50.620:FF:000009">
    <property type="entry name" value="Cysteine--tRNA ligase"/>
    <property type="match status" value="1"/>
</dbReference>
<dbReference type="Gene3D" id="1.20.120.1910">
    <property type="entry name" value="Cysteine-tRNA ligase, C-terminal anti-codon recognition domain"/>
    <property type="match status" value="1"/>
</dbReference>
<dbReference type="Gene3D" id="3.40.50.620">
    <property type="entry name" value="HUPs"/>
    <property type="match status" value="1"/>
</dbReference>
<dbReference type="HAMAP" id="MF_00041">
    <property type="entry name" value="Cys_tRNA_synth"/>
    <property type="match status" value="1"/>
</dbReference>
<dbReference type="InterPro" id="IPR015803">
    <property type="entry name" value="Cys-tRNA-ligase"/>
</dbReference>
<dbReference type="InterPro" id="IPR015273">
    <property type="entry name" value="Cys-tRNA-synt_Ia_DALR"/>
</dbReference>
<dbReference type="InterPro" id="IPR024909">
    <property type="entry name" value="Cys-tRNA/MSH_ligase"/>
</dbReference>
<dbReference type="InterPro" id="IPR056411">
    <property type="entry name" value="CysS_C"/>
</dbReference>
<dbReference type="InterPro" id="IPR014729">
    <property type="entry name" value="Rossmann-like_a/b/a_fold"/>
</dbReference>
<dbReference type="InterPro" id="IPR032678">
    <property type="entry name" value="tRNA-synt_1_cat_dom"/>
</dbReference>
<dbReference type="InterPro" id="IPR009080">
    <property type="entry name" value="tRNAsynth_Ia_anticodon-bd"/>
</dbReference>
<dbReference type="NCBIfam" id="TIGR00435">
    <property type="entry name" value="cysS"/>
    <property type="match status" value="1"/>
</dbReference>
<dbReference type="PANTHER" id="PTHR10890:SF3">
    <property type="entry name" value="CYSTEINE--TRNA LIGASE, CYTOPLASMIC"/>
    <property type="match status" value="1"/>
</dbReference>
<dbReference type="PANTHER" id="PTHR10890">
    <property type="entry name" value="CYSTEINYL-TRNA SYNTHETASE"/>
    <property type="match status" value="1"/>
</dbReference>
<dbReference type="Pfam" id="PF23493">
    <property type="entry name" value="CysS_C"/>
    <property type="match status" value="1"/>
</dbReference>
<dbReference type="Pfam" id="PF09190">
    <property type="entry name" value="DALR_2"/>
    <property type="match status" value="1"/>
</dbReference>
<dbReference type="Pfam" id="PF01406">
    <property type="entry name" value="tRNA-synt_1e"/>
    <property type="match status" value="1"/>
</dbReference>
<dbReference type="PRINTS" id="PR00983">
    <property type="entry name" value="TRNASYNTHCYS"/>
</dbReference>
<dbReference type="SMART" id="SM00840">
    <property type="entry name" value="DALR_2"/>
    <property type="match status" value="1"/>
</dbReference>
<dbReference type="SUPFAM" id="SSF47323">
    <property type="entry name" value="Anticodon-binding domain of a subclass of class I aminoacyl-tRNA synthetases"/>
    <property type="match status" value="1"/>
</dbReference>
<dbReference type="SUPFAM" id="SSF52374">
    <property type="entry name" value="Nucleotidylyl transferase"/>
    <property type="match status" value="1"/>
</dbReference>
<proteinExistence type="inferred from homology"/>
<comment type="catalytic activity">
    <reaction evidence="1">
        <text>tRNA(Cys) + L-cysteine + ATP = L-cysteinyl-tRNA(Cys) + AMP + diphosphate</text>
        <dbReference type="Rhea" id="RHEA:17773"/>
        <dbReference type="Rhea" id="RHEA-COMP:9661"/>
        <dbReference type="Rhea" id="RHEA-COMP:9679"/>
        <dbReference type="ChEBI" id="CHEBI:30616"/>
        <dbReference type="ChEBI" id="CHEBI:33019"/>
        <dbReference type="ChEBI" id="CHEBI:35235"/>
        <dbReference type="ChEBI" id="CHEBI:78442"/>
        <dbReference type="ChEBI" id="CHEBI:78517"/>
        <dbReference type="ChEBI" id="CHEBI:456215"/>
        <dbReference type="EC" id="6.1.1.16"/>
    </reaction>
</comment>
<comment type="cofactor">
    <cofactor evidence="1">
        <name>Zn(2+)</name>
        <dbReference type="ChEBI" id="CHEBI:29105"/>
    </cofactor>
    <text evidence="1">Binds 1 zinc ion per subunit.</text>
</comment>
<comment type="subunit">
    <text evidence="1">Monomer.</text>
</comment>
<comment type="subcellular location">
    <subcellularLocation>
        <location evidence="1">Cytoplasm</location>
    </subcellularLocation>
</comment>
<comment type="similarity">
    <text evidence="1">Belongs to the class-I aminoacyl-tRNA synthetase family.</text>
</comment>
<evidence type="ECO:0000255" key="1">
    <source>
        <dbReference type="HAMAP-Rule" id="MF_00041"/>
    </source>
</evidence>
<reference key="1">
    <citation type="submission" date="2006-03" db="EMBL/GenBank/DDBJ databases">
        <title>Complete sequence of Shewanella denitrificans OS217.</title>
        <authorList>
            <consortium name="US DOE Joint Genome Institute"/>
            <person name="Copeland A."/>
            <person name="Lucas S."/>
            <person name="Lapidus A."/>
            <person name="Barry K."/>
            <person name="Detter J.C."/>
            <person name="Glavina del Rio T."/>
            <person name="Hammon N."/>
            <person name="Israni S."/>
            <person name="Dalin E."/>
            <person name="Tice H."/>
            <person name="Pitluck S."/>
            <person name="Brettin T."/>
            <person name="Bruce D."/>
            <person name="Han C."/>
            <person name="Tapia R."/>
            <person name="Gilna P."/>
            <person name="Kiss H."/>
            <person name="Schmutz J."/>
            <person name="Larimer F."/>
            <person name="Land M."/>
            <person name="Hauser L."/>
            <person name="Kyrpides N."/>
            <person name="Lykidis A."/>
            <person name="Richardson P."/>
        </authorList>
    </citation>
    <scope>NUCLEOTIDE SEQUENCE [LARGE SCALE GENOMIC DNA]</scope>
    <source>
        <strain>OS217 / ATCC BAA-1090 / DSM 15013</strain>
    </source>
</reference>
<sequence length="459" mass="52187">MLKIYNSMSREKQEFKPITPGKIGMYVCGITIYDLCHIGHGRTFVSFDMIVRYLRYLGYEVNFQRNITDVDDKIIKRAAENNESCDALTERLTAEMHKDFDALNMVRPDFEPKATLHMPEIIEMVQRLLDRGHAYVAPDGDVLFSVASYKEYGRLSGQNIDQLQAGARVEIDHNKQNPMDFVLWKMSKPGEPTWESPWGAGRPGWHIECSAMNGKHLGTHFDIHGGGSDLQFPHHENEIAQSCCAHDTPYVNYWMHTGMVMVDREKMSKSLGNFFTIRDVLKHYDAQTVRYFLLSGHYRSQLNYSEDNLKQARSALERLYTAFKDLDLTVTAAPADEYVTKFKSAMNDDFNTPEAYSVLFDMVREINRLKTTDMGAASALGVSMKQLADVLGIVSVDIETFFKGSGSDDEVAEIEALIVERNRARTEKDWAAADVARDRLNQLGVVLEDGENGTTWKKK</sequence>